<organism evidence="7">
    <name type="scientific">Caenorhabditis elegans</name>
    <dbReference type="NCBI Taxonomy" id="6239"/>
    <lineage>
        <taxon>Eukaryota</taxon>
        <taxon>Metazoa</taxon>
        <taxon>Ecdysozoa</taxon>
        <taxon>Nematoda</taxon>
        <taxon>Chromadorea</taxon>
        <taxon>Rhabditida</taxon>
        <taxon>Rhabditina</taxon>
        <taxon>Rhabditomorpha</taxon>
        <taxon>Rhabditoidea</taxon>
        <taxon>Rhabditidae</taxon>
        <taxon>Peloderinae</taxon>
        <taxon>Caenorhabditis</taxon>
    </lineage>
</organism>
<keyword id="KW-0217">Developmental protein</keyword>
<keyword id="KW-0238">DNA-binding</keyword>
<keyword id="KW-0371">Homeobox</keyword>
<keyword id="KW-0539">Nucleus</keyword>
<keyword id="KW-1185">Reference proteome</keyword>
<keyword id="KW-0804">Transcription</keyword>
<keyword id="KW-0805">Transcription regulation</keyword>
<dbReference type="EMBL" id="BX284605">
    <property type="protein sequence ID" value="CAB04483.2"/>
    <property type="molecule type" value="Genomic_DNA"/>
</dbReference>
<dbReference type="PIR" id="T22761">
    <property type="entry name" value="T22761"/>
</dbReference>
<dbReference type="RefSeq" id="NP_506563.2">
    <property type="nucleotide sequence ID" value="NM_074162.3"/>
</dbReference>
<dbReference type="SMR" id="O17894"/>
<dbReference type="DIP" id="DIP-24571N"/>
<dbReference type="FunCoup" id="O17894">
    <property type="interactions" value="15"/>
</dbReference>
<dbReference type="IntAct" id="O17894">
    <property type="interactions" value="8"/>
</dbReference>
<dbReference type="STRING" id="6239.F56A12.1.1"/>
<dbReference type="PaxDb" id="6239-F56A12.1"/>
<dbReference type="EnsemblMetazoa" id="F56A12.1.1">
    <property type="protein sequence ID" value="F56A12.1.1"/>
    <property type="gene ID" value="WBGene00006775"/>
</dbReference>
<dbReference type="GeneID" id="191623"/>
<dbReference type="KEGG" id="cel:CELE_F56A12.1"/>
<dbReference type="UCSC" id="F56A12.1">
    <property type="organism name" value="c. elegans"/>
</dbReference>
<dbReference type="AGR" id="WB:WBGene00006775"/>
<dbReference type="CTD" id="191623"/>
<dbReference type="WormBase" id="F56A12.1">
    <property type="protein sequence ID" value="CE37921"/>
    <property type="gene ID" value="WBGene00006775"/>
    <property type="gene designation" value="unc-39"/>
</dbReference>
<dbReference type="eggNOG" id="KOG0775">
    <property type="taxonomic scope" value="Eukaryota"/>
</dbReference>
<dbReference type="GeneTree" id="ENSGT00940000167410"/>
<dbReference type="HOGENOM" id="CLU_872206_0_0_1"/>
<dbReference type="InParanoid" id="O17894"/>
<dbReference type="OMA" id="IWHHARY"/>
<dbReference type="OrthoDB" id="3501850at2759"/>
<dbReference type="PhylomeDB" id="O17894"/>
<dbReference type="PRO" id="PR:O17894"/>
<dbReference type="Proteomes" id="UP000001940">
    <property type="component" value="Chromosome V"/>
</dbReference>
<dbReference type="Bgee" id="WBGene00006775">
    <property type="expression patterns" value="Expressed in embryo and 3 other cell types or tissues"/>
</dbReference>
<dbReference type="GO" id="GO:0005634">
    <property type="term" value="C:nucleus"/>
    <property type="evidence" value="ECO:0000314"/>
    <property type="project" value="WormBase"/>
</dbReference>
<dbReference type="GO" id="GO:0005667">
    <property type="term" value="C:transcription regulator complex"/>
    <property type="evidence" value="ECO:0000318"/>
    <property type="project" value="GO_Central"/>
</dbReference>
<dbReference type="GO" id="GO:0000981">
    <property type="term" value="F:DNA-binding transcription factor activity, RNA polymerase II-specific"/>
    <property type="evidence" value="ECO:0000318"/>
    <property type="project" value="GO_Central"/>
</dbReference>
<dbReference type="GO" id="GO:0000978">
    <property type="term" value="F:RNA polymerase II cis-regulatory region sequence-specific DNA binding"/>
    <property type="evidence" value="ECO:0000318"/>
    <property type="project" value="GO_Central"/>
</dbReference>
<dbReference type="GO" id="GO:0007411">
    <property type="term" value="P:axon guidance"/>
    <property type="evidence" value="ECO:0000315"/>
    <property type="project" value="UniProtKB"/>
</dbReference>
<dbReference type="GO" id="GO:0018991">
    <property type="term" value="P:egg-laying behavior"/>
    <property type="evidence" value="ECO:0000315"/>
    <property type="project" value="WormBase"/>
</dbReference>
<dbReference type="GO" id="GO:0040011">
    <property type="term" value="P:locomotion"/>
    <property type="evidence" value="ECO:0000315"/>
    <property type="project" value="WormBase"/>
</dbReference>
<dbReference type="GO" id="GO:0008078">
    <property type="term" value="P:mesodermal cell migration"/>
    <property type="evidence" value="ECO:0000315"/>
    <property type="project" value="WormBase"/>
</dbReference>
<dbReference type="GO" id="GO:0001764">
    <property type="term" value="P:neuron migration"/>
    <property type="evidence" value="ECO:0000315"/>
    <property type="project" value="UniProtKB"/>
</dbReference>
<dbReference type="GO" id="GO:0040017">
    <property type="term" value="P:positive regulation of locomotion"/>
    <property type="evidence" value="ECO:0000315"/>
    <property type="project" value="UniProtKB"/>
</dbReference>
<dbReference type="GO" id="GO:0030334">
    <property type="term" value="P:regulation of cell migration"/>
    <property type="evidence" value="ECO:0000315"/>
    <property type="project" value="WormBase"/>
</dbReference>
<dbReference type="GO" id="GO:0110037">
    <property type="term" value="P:regulation of nematode male tail tip morphogenesis"/>
    <property type="evidence" value="ECO:0000315"/>
    <property type="project" value="UniProtKB"/>
</dbReference>
<dbReference type="GO" id="GO:0006357">
    <property type="term" value="P:regulation of transcription by RNA polymerase II"/>
    <property type="evidence" value="ECO:0000318"/>
    <property type="project" value="GO_Central"/>
</dbReference>
<dbReference type="CDD" id="cd00086">
    <property type="entry name" value="homeodomain"/>
    <property type="match status" value="1"/>
</dbReference>
<dbReference type="FunFam" id="1.10.10.60:FF:000581">
    <property type="entry name" value="Homeobox protein six1a"/>
    <property type="match status" value="1"/>
</dbReference>
<dbReference type="Gene3D" id="1.10.10.60">
    <property type="entry name" value="Homeodomain-like"/>
    <property type="match status" value="1"/>
</dbReference>
<dbReference type="InterPro" id="IPR001356">
    <property type="entry name" value="HD"/>
</dbReference>
<dbReference type="InterPro" id="IPR017970">
    <property type="entry name" value="Homeobox_CS"/>
</dbReference>
<dbReference type="InterPro" id="IPR009057">
    <property type="entry name" value="Homeodomain-like_sf"/>
</dbReference>
<dbReference type="InterPro" id="IPR031701">
    <property type="entry name" value="SIX1_SD"/>
</dbReference>
<dbReference type="PANTHER" id="PTHR10390">
    <property type="entry name" value="HOMEOBOX PROTEIN SIX"/>
    <property type="match status" value="1"/>
</dbReference>
<dbReference type="PANTHER" id="PTHR10390:SF44">
    <property type="entry name" value="SIX HOMEOBOX 4"/>
    <property type="match status" value="1"/>
</dbReference>
<dbReference type="Pfam" id="PF00046">
    <property type="entry name" value="Homeodomain"/>
    <property type="match status" value="1"/>
</dbReference>
<dbReference type="Pfam" id="PF16878">
    <property type="entry name" value="SIX1_SD"/>
    <property type="match status" value="1"/>
</dbReference>
<dbReference type="SMART" id="SM00389">
    <property type="entry name" value="HOX"/>
    <property type="match status" value="1"/>
</dbReference>
<dbReference type="SUPFAM" id="SSF46689">
    <property type="entry name" value="Homeodomain-like"/>
    <property type="match status" value="1"/>
</dbReference>
<dbReference type="PROSITE" id="PS00027">
    <property type="entry name" value="HOMEOBOX_1"/>
    <property type="match status" value="1"/>
</dbReference>
<dbReference type="PROSITE" id="PS50071">
    <property type="entry name" value="HOMEOBOX_2"/>
    <property type="match status" value="1"/>
</dbReference>
<gene>
    <name evidence="8" type="primary">unc-39</name>
    <name evidence="8" type="synonym">ceh-35</name>
    <name evidence="8" type="synonym">mig-3</name>
    <name evidence="8" type="ORF">F56A12.1</name>
</gene>
<comment type="function">
    <text evidence="3 4 5">Probable transcription factor required for differentiation and migration of neuronal cells, such as RID and CAN neurons (PubMed:15282156, PubMed:2361334). Specifically, plays a role in the terminal differentiation of RID peptidergic neurons (PubMed:27855782). Also required for CAN neuron axon guidance (PubMed:15282156).</text>
</comment>
<comment type="interaction">
    <interactant intactId="EBI-317698">
        <id>O17894</id>
    </interactant>
    <interactant intactId="EBI-311862">
        <id>O17670</id>
        <label>eya-1</label>
    </interactant>
    <organismsDiffer>false</organismsDiffer>
    <experiments>5</experiments>
</comment>
<comment type="subcellular location">
    <subcellularLocation>
        <location evidence="1 3">Nucleus</location>
    </subcellularLocation>
</comment>
<comment type="developmental stage">
    <text evidence="3 5">Expressed in muscles and neurons from embryogenesis to adulthood (PubMed:15282156, PubMed:27855782). First expressed post-fertilization, then accumulates in anterior cells of the embryo that give rise to neuronal and mesodermal tissues and body wall muscle cells, where expression persists and increases (PubMed:15282156). Also expressed in posterior nuclei post-fertilization (PubMed:15282156). At the 2-fold stage of embryogenesis, expression is restricted to fewer cells (PubMed:15282156).</text>
</comment>
<comment type="disruption phenotype">
    <text evidence="3">RNAi-mediated knockdown results in 60% larval lethality (PubMed:15282156). Surviving animals display uncoordinated locomotion, withered tail morphology, and defects in both CAN neuronal cell migration and axon guidance (PubMed:15282156).</text>
</comment>
<comment type="similarity">
    <text evidence="6">Belongs to the SIX/Sine oculis homeobox family.</text>
</comment>
<name>HM35_CAEEL</name>
<accession>O17894</accession>
<reference evidence="7" key="1">
    <citation type="journal article" date="1998" name="Science">
        <title>Genome sequence of the nematode C. elegans: a platform for investigating biology.</title>
        <authorList>
            <consortium name="The C. elegans sequencing consortium"/>
        </authorList>
    </citation>
    <scope>NUCLEOTIDE SEQUENCE [LARGE SCALE GENOMIC DNA]</scope>
    <source>
        <strain evidence="7">Bristol N2</strain>
    </source>
</reference>
<reference evidence="6" key="2">
    <citation type="journal article" date="1990" name="Dev. Genet.">
        <title>Mutations affecting embryonic cell migrations in Caenorhabditis elegans.</title>
        <authorList>
            <person name="Manser J."/>
            <person name="Wood W.B."/>
        </authorList>
    </citation>
    <scope>FUNCTION</scope>
    <scope>MUTAGENESIS OF ILE-220</scope>
</reference>
<reference evidence="6" key="3">
    <citation type="journal article" date="2004" name="Dev. Biol.">
        <title>UNC-39, the C. elegans homolog of the human myotonic dystrophy-associated homeodomain protein Six5, regulates cell motility and differentiation.</title>
        <authorList>
            <person name="Yanowitz J.L."/>
            <person name="Shakir M.A."/>
            <person name="Hedgecock E."/>
            <person name="Hutter H."/>
            <person name="Fire A.Z."/>
            <person name="Lundquist E.A."/>
        </authorList>
    </citation>
    <scope>FUNCTION</scope>
    <scope>SUBCELLULAR LOCATION</scope>
    <scope>DEVELOPMENTAL STAGE</scope>
    <scope>DISRUPTION PHENOTYPE</scope>
    <scope>MUTAGENESIS OF ARG-203; ILE-220 AND PRO-283</scope>
</reference>
<reference evidence="6" key="4">
    <citation type="journal article" date="2016" name="Elife">
        <title>Neuroendocrine modulation sustains the C. elegans forward motor state.</title>
        <authorList>
            <person name="Lim M.A."/>
            <person name="Chitturi J."/>
            <person name="Laskova V."/>
            <person name="Meng J."/>
            <person name="Findeis D."/>
            <person name="Wiekenberg A."/>
            <person name="Mulcahy B."/>
            <person name="Luo L."/>
            <person name="Li Y."/>
            <person name="Lu Y."/>
            <person name="Hung W."/>
            <person name="Qu Y."/>
            <person name="Ho C.Y."/>
            <person name="Holmyard D."/>
            <person name="Ji N."/>
            <person name="McWhirter R."/>
            <person name="Samuel A.D."/>
            <person name="Miller D.M."/>
            <person name="Schnabel R."/>
            <person name="Calarco J.A."/>
            <person name="Zhen M."/>
        </authorList>
    </citation>
    <scope>FUNCTION</scope>
    <scope>DEVELOPMENTAL STAGE</scope>
    <scope>MUTAGENESIS OF ARG-203 AND PRO-298</scope>
</reference>
<reference key="5">
    <citation type="journal article" date="2017" name="Elife">
        <title>Correction: Neuroendocrine modulation sustains the C. elegans forward motor state.</title>
        <authorList>
            <person name="Lim M."/>
            <person name="Chitturi J."/>
            <person name="Laskova V."/>
            <person name="Meng J."/>
            <person name="Findeis D."/>
            <person name="Wiekenberg A."/>
            <person name="Mulcahy B."/>
            <person name="Luo L."/>
            <person name="Li Y."/>
            <person name="Lu Y."/>
            <person name="Hung W."/>
            <person name="Qu Y."/>
            <person name="Ho C."/>
            <person name="Holmyard D."/>
            <person name="Ji N."/>
            <person name="McWhirter R.D."/>
            <person name="Samuel A.D."/>
            <person name="Miller D.M."/>
            <person name="Schnabel R."/>
            <person name="Calarco J.A."/>
            <person name="Zhen M."/>
        </authorList>
    </citation>
    <scope>ERRATUM OF PUBMED:27855782</scope>
</reference>
<evidence type="ECO:0000255" key="1">
    <source>
        <dbReference type="PROSITE-ProRule" id="PRU00108"/>
    </source>
</evidence>
<evidence type="ECO:0000256" key="2">
    <source>
        <dbReference type="SAM" id="MobiDB-lite"/>
    </source>
</evidence>
<evidence type="ECO:0000269" key="3">
    <source>
    </source>
</evidence>
<evidence type="ECO:0000269" key="4">
    <source>
    </source>
</evidence>
<evidence type="ECO:0000269" key="5">
    <source>
    </source>
</evidence>
<evidence type="ECO:0000305" key="6"/>
<evidence type="ECO:0000312" key="7">
    <source>
        <dbReference type="Proteomes" id="UP000001940"/>
    </source>
</evidence>
<evidence type="ECO:0000312" key="8">
    <source>
        <dbReference type="WormBase" id="F56A12.1"/>
    </source>
</evidence>
<sequence>MTDHPPIDTSSYFDCYQQHQLPLQYTFTSSSNSNTSNSSTSPSHISDQFSSSGGPPYELSSHILTPSSVIPTPSPSVASASISSPTIPAFGCTMSEYSMEQMEAISTSLFQARDGDRLVAFFKQLESLYGPNAVDHLRSEAIIVAYTYALYHSNEFETLFHLLSNRHFQQRHYNDLQDIWHHARYKESQLKRGKELNPVEKYRLRRKFPAPKTIWDGEEIVYSFKDSSRKFLKQFFRNVSEYPTQEQKREISRATGLKIVQISNWFKNRRQRDKSNNSAKCSPPSSSSSTNGGSDFLPIITPQSFNLAAAPFNMNMIYGTLRDSQSDNDQFTFNP</sequence>
<proteinExistence type="evidence at protein level"/>
<feature type="chain" id="PRO_0000446110" description="Homeobox protein unc-39">
    <location>
        <begin position="1"/>
        <end position="335"/>
    </location>
</feature>
<feature type="DNA-binding region" description="Homeobox" evidence="1">
    <location>
        <begin position="225"/>
        <end position="277"/>
    </location>
</feature>
<feature type="region of interest" description="Disordered" evidence="2">
    <location>
        <begin position="27"/>
        <end position="56"/>
    </location>
</feature>
<feature type="region of interest" description="Disordered" evidence="2">
    <location>
        <begin position="269"/>
        <end position="294"/>
    </location>
</feature>
<feature type="compositionally biased region" description="Low complexity" evidence="2">
    <location>
        <begin position="28"/>
        <end position="41"/>
    </location>
</feature>
<feature type="compositionally biased region" description="Polar residues" evidence="2">
    <location>
        <begin position="42"/>
        <end position="53"/>
    </location>
</feature>
<feature type="compositionally biased region" description="Low complexity" evidence="2">
    <location>
        <begin position="276"/>
        <end position="294"/>
    </location>
</feature>
<feature type="mutagenesis site" description="In e257; uncoordinated locomotion, withered tail morphology, egg-laying defects, protruding vulvae and multiple vulvae. Defective pharyngeal development, which results in animals appearing starved. Mesodermal lineage and neuronal cell migration and specification defects. Abolishes differentiation of RID peptidergic neurons." evidence="3 5">
    <original>R</original>
    <variation>Q</variation>
    <location>
        <position position="203"/>
    </location>
</feature>
<feature type="mutagenesis site" description="In ct73; uncoordinated locomotion, withered tail morphology, egg-laying defects, protruding vulvae and multiple vulvae. Defective pharyngeal development, which results in animals appearing starved. Mesodermal lineage and neuronal cell migration and specification defects." evidence="3 4">
    <original>I</original>
    <variation>IQF</variation>
    <location>
        <position position="220"/>
    </location>
</feature>
<feature type="mutagenesis site" description="In rh72; uncoordinated locomotion, withered tail morphology, egg-laying defects, protruding vulvae and multiple vulvae. Defective pharyngeal development, which results in animals appearing starved. Mesodermal lineage and neuronal cell migration and specification defects." evidence="3">
    <original>P</original>
    <variation>L</variation>
    <location>
        <position position="283"/>
    </location>
</feature>
<feature type="mutagenesis site" description="In hp701; abolishes differentiation of RID peptidergic neurons." evidence="5">
    <original>P</original>
    <variation>L</variation>
    <location>
        <position position="298"/>
    </location>
</feature>
<protein>
    <recommendedName>
        <fullName evidence="6">Homeobox protein unc-39</fullName>
    </recommendedName>
    <alternativeName>
        <fullName evidence="8">Homeobox protein ceh-35</fullName>
    </alternativeName>
    <alternativeName>
        <fullName evidence="8">Uncoordinated protein 39</fullName>
    </alternativeName>
</protein>